<dbReference type="EMBL" id="AF060173">
    <property type="protein sequence ID" value="AAC78627.1"/>
    <property type="molecule type" value="mRNA"/>
</dbReference>
<dbReference type="RefSeq" id="NP_599231.3">
    <property type="nucleotide sequence ID" value="NM_134404.4"/>
</dbReference>
<dbReference type="RefSeq" id="XP_008767537.1">
    <property type="nucleotide sequence ID" value="XM_008769315.2"/>
</dbReference>
<dbReference type="SMR" id="Q9Z2I7"/>
<dbReference type="FunCoup" id="Q9Z2I7">
    <property type="interactions" value="678"/>
</dbReference>
<dbReference type="STRING" id="10116.ENSRNOP00000000874"/>
<dbReference type="iPTMnet" id="Q9Z2I7"/>
<dbReference type="PhosphoSitePlus" id="Q9Z2I7"/>
<dbReference type="PaxDb" id="10116-ENSRNOP00000000874"/>
<dbReference type="ABCD" id="Q9Z2I7">
    <property type="antibodies" value="2 sequenced antibodies"/>
</dbReference>
<dbReference type="GeneID" id="171442"/>
<dbReference type="KEGG" id="rno:171442"/>
<dbReference type="UCSC" id="RGD:620277">
    <property type="organism name" value="rat"/>
</dbReference>
<dbReference type="AGR" id="RGD:620277"/>
<dbReference type="CTD" id="55530"/>
<dbReference type="RGD" id="620277">
    <property type="gene designation" value="Svop"/>
</dbReference>
<dbReference type="VEuPathDB" id="HostDB:ENSRNOG00000000693"/>
<dbReference type="eggNOG" id="KOG0253">
    <property type="taxonomic scope" value="Eukaryota"/>
</dbReference>
<dbReference type="eggNOG" id="KOG0255">
    <property type="taxonomic scope" value="Eukaryota"/>
</dbReference>
<dbReference type="HOGENOM" id="CLU_001265_46_0_1"/>
<dbReference type="InParanoid" id="Q9Z2I7"/>
<dbReference type="OrthoDB" id="4139357at2759"/>
<dbReference type="PRO" id="PR:Q9Z2I7"/>
<dbReference type="Proteomes" id="UP000002494">
    <property type="component" value="Chromosome 12"/>
</dbReference>
<dbReference type="Bgee" id="ENSRNOG00000000693">
    <property type="expression patterns" value="Expressed in frontal cortex and 9 other cell types or tissues"/>
</dbReference>
<dbReference type="ExpressionAtlas" id="Q9Z2I7">
    <property type="expression patterns" value="baseline and differential"/>
</dbReference>
<dbReference type="GO" id="GO:0008021">
    <property type="term" value="C:synaptic vesicle"/>
    <property type="evidence" value="ECO:0000314"/>
    <property type="project" value="HGNC-UCL"/>
</dbReference>
<dbReference type="GO" id="GO:0030672">
    <property type="term" value="C:synaptic vesicle membrane"/>
    <property type="evidence" value="ECO:0000314"/>
    <property type="project" value="SynGO"/>
</dbReference>
<dbReference type="GO" id="GO:0022857">
    <property type="term" value="F:transmembrane transporter activity"/>
    <property type="evidence" value="ECO:0007669"/>
    <property type="project" value="InterPro"/>
</dbReference>
<dbReference type="CDD" id="cd17441">
    <property type="entry name" value="MFS_SVOP"/>
    <property type="match status" value="1"/>
</dbReference>
<dbReference type="FunFam" id="1.20.1250.20:FF:000084">
    <property type="entry name" value="Synaptic vesicle 2-related protein"/>
    <property type="match status" value="1"/>
</dbReference>
<dbReference type="Gene3D" id="1.20.1250.20">
    <property type="entry name" value="MFS general substrate transporter like domains"/>
    <property type="match status" value="1"/>
</dbReference>
<dbReference type="InterPro" id="IPR011701">
    <property type="entry name" value="MFS"/>
</dbReference>
<dbReference type="InterPro" id="IPR020846">
    <property type="entry name" value="MFS_dom"/>
</dbReference>
<dbReference type="InterPro" id="IPR005828">
    <property type="entry name" value="MFS_sugar_transport-like"/>
</dbReference>
<dbReference type="InterPro" id="IPR036259">
    <property type="entry name" value="MFS_trans_sf"/>
</dbReference>
<dbReference type="InterPro" id="IPR004749">
    <property type="entry name" value="Orgcat_transp/SVOP"/>
</dbReference>
<dbReference type="InterPro" id="IPR047969">
    <property type="entry name" value="SVOP-like_MFS_dom"/>
</dbReference>
<dbReference type="NCBIfam" id="TIGR00898">
    <property type="entry name" value="2A0119"/>
    <property type="match status" value="1"/>
</dbReference>
<dbReference type="PANTHER" id="PTHR23511:SF5">
    <property type="entry name" value="MAJOR FACILITATOR-TYPE TRANSPORTER HXNZ-RELATED"/>
    <property type="match status" value="1"/>
</dbReference>
<dbReference type="PANTHER" id="PTHR23511">
    <property type="entry name" value="SYNAPTIC VESICLE GLYCOPROTEIN 2"/>
    <property type="match status" value="1"/>
</dbReference>
<dbReference type="Pfam" id="PF07690">
    <property type="entry name" value="MFS_1"/>
    <property type="match status" value="1"/>
</dbReference>
<dbReference type="Pfam" id="PF00083">
    <property type="entry name" value="Sugar_tr"/>
    <property type="match status" value="1"/>
</dbReference>
<dbReference type="SUPFAM" id="SSF103473">
    <property type="entry name" value="MFS general substrate transporter"/>
    <property type="match status" value="1"/>
</dbReference>
<dbReference type="PROSITE" id="PS50850">
    <property type="entry name" value="MFS"/>
    <property type="match status" value="1"/>
</dbReference>
<proteinExistence type="evidence at protein level"/>
<reference key="1">
    <citation type="journal article" date="1998" name="J. Neurosci.">
        <title>SVOP, an evolutionarily conserved synaptic vesicle protein, suggests novel transport functions of synaptic vesicles.</title>
        <authorList>
            <person name="Janz R."/>
            <person name="Hofmann K."/>
            <person name="Suedhof T.C."/>
        </authorList>
    </citation>
    <scope>NUCLEOTIDE SEQUENCE [MRNA]</scope>
    <scope>SUBCELLULAR LOCATION</scope>
    <scope>TISSUE SPECIFICITY</scope>
    <source>
        <tissue>Brain</tissue>
    </source>
</reference>
<reference key="2">
    <citation type="journal article" date="2012" name="Nat. Commun.">
        <title>Quantitative maps of protein phosphorylation sites across 14 different rat organs and tissues.</title>
        <authorList>
            <person name="Lundby A."/>
            <person name="Secher A."/>
            <person name="Lage K."/>
            <person name="Nordsborg N.B."/>
            <person name="Dmytriyev A."/>
            <person name="Lundby C."/>
            <person name="Olsen J.V."/>
        </authorList>
    </citation>
    <scope>PHOSPHORYLATION [LARGE SCALE ANALYSIS] AT SER-25 AND SER-31</scope>
    <scope>IDENTIFICATION BY MASS SPECTROMETRY [LARGE SCALE ANALYSIS]</scope>
</reference>
<organism>
    <name type="scientific">Rattus norvegicus</name>
    <name type="common">Rat</name>
    <dbReference type="NCBI Taxonomy" id="10116"/>
    <lineage>
        <taxon>Eukaryota</taxon>
        <taxon>Metazoa</taxon>
        <taxon>Chordata</taxon>
        <taxon>Craniata</taxon>
        <taxon>Vertebrata</taxon>
        <taxon>Euteleostomi</taxon>
        <taxon>Mammalia</taxon>
        <taxon>Eutheria</taxon>
        <taxon>Euarchontoglires</taxon>
        <taxon>Glires</taxon>
        <taxon>Rodentia</taxon>
        <taxon>Myomorpha</taxon>
        <taxon>Muroidea</taxon>
        <taxon>Muridae</taxon>
        <taxon>Murinae</taxon>
        <taxon>Rattus</taxon>
    </lineage>
</organism>
<keyword id="KW-0968">Cytoplasmic vesicle</keyword>
<keyword id="KW-0472">Membrane</keyword>
<keyword id="KW-0597">Phosphoprotein</keyword>
<keyword id="KW-1185">Reference proteome</keyword>
<keyword id="KW-0770">Synapse</keyword>
<keyword id="KW-0812">Transmembrane</keyword>
<keyword id="KW-1133">Transmembrane helix</keyword>
<keyword id="KW-0813">Transport</keyword>
<sequence length="548" mass="60804">MEEDLFQLRQLPVVKFRRTGESARSEDDAASGEHDVQIEGVRVGLEAVELDDGAAVPKEFANPTDDTFMVEDAVEAIGFGRFQWKLSVLTGLAWMADAMEMMILSILAPQLHCEWRLPSWQVALLTSVVFIGMMSSSTLWGNISDQYGRKTGLKISVFWTLYYGILSAFAPVYSWILVLRGLVGFGIGGVPQSVTLYAEFLPMKARAKCILLIEVFWAIGTVFEVLLAVFVMPSLGWRWLLLLSAAPLLVFAVLCFWLPESARYDVLSGNQEKAIATLKRIATENGAPMPLGKLIISRQEDRGKMRDLFTPHFRWTTLLLWFIWFSNAFSYYGLVLLTTELFQAGDVCSISSRKKAVEAKCSLACEYLSKEDYMDLLWTTLSEFPGVLVTLWVIDRLGRKKTMALCFVIFSLCSLLLFICIGRNVLTLLLFIARAFISGGFQAAYVYTPEVYPTATRALGLGTCSGMARVGALITPFIAQVMLESSVYLTLAVYSGCCLLAALASCFLPIETKGRALQESSHREWGQEMVGRGTNSTGVPRSNSGSQE</sequence>
<feature type="chain" id="PRO_0000279455" description="Synaptic vesicle 2-related protein">
    <location>
        <begin position="1"/>
        <end position="548"/>
    </location>
</feature>
<feature type="topological domain" description="Cytoplasmic" evidence="2">
    <location>
        <begin position="1"/>
        <end position="87"/>
    </location>
</feature>
<feature type="transmembrane region" description="Helical" evidence="2">
    <location>
        <begin position="88"/>
        <end position="108"/>
    </location>
</feature>
<feature type="topological domain" description="Vesicular" evidence="2">
    <location>
        <begin position="109"/>
        <end position="122"/>
    </location>
</feature>
<feature type="transmembrane region" description="Helical" evidence="2">
    <location>
        <begin position="123"/>
        <end position="143"/>
    </location>
</feature>
<feature type="topological domain" description="Cytoplasmic" evidence="2">
    <location>
        <begin position="144"/>
        <end position="156"/>
    </location>
</feature>
<feature type="transmembrane region" description="Helical" evidence="2">
    <location>
        <begin position="157"/>
        <end position="177"/>
    </location>
</feature>
<feature type="topological domain" description="Vesicular" evidence="2">
    <location>
        <begin position="178"/>
        <end position="180"/>
    </location>
</feature>
<feature type="transmembrane region" description="Helical" evidence="2">
    <location>
        <begin position="181"/>
        <end position="201"/>
    </location>
</feature>
<feature type="topological domain" description="Cytoplasmic" evidence="2">
    <location>
        <begin position="202"/>
        <end position="209"/>
    </location>
</feature>
<feature type="transmembrane region" description="Helical" evidence="2">
    <location>
        <begin position="210"/>
        <end position="230"/>
    </location>
</feature>
<feature type="topological domain" description="Vesicular" evidence="2">
    <location>
        <begin position="231"/>
        <end position="238"/>
    </location>
</feature>
<feature type="transmembrane region" description="Helical" evidence="2">
    <location>
        <begin position="239"/>
        <end position="259"/>
    </location>
</feature>
<feature type="topological domain" description="Cytoplasmic" evidence="2">
    <location>
        <begin position="260"/>
        <end position="316"/>
    </location>
</feature>
<feature type="transmembrane region" description="Helical" evidence="2">
    <location>
        <begin position="317"/>
        <end position="337"/>
    </location>
</feature>
<feature type="topological domain" description="Vesicular" evidence="2">
    <location>
        <begin position="338"/>
        <end position="373"/>
    </location>
</feature>
<feature type="transmembrane region" description="Helical" evidence="2">
    <location>
        <begin position="374"/>
        <end position="394"/>
    </location>
</feature>
<feature type="topological domain" description="Cytoplasmic" evidence="2">
    <location>
        <begin position="395"/>
        <end position="401"/>
    </location>
</feature>
<feature type="transmembrane region" description="Helical" evidence="2">
    <location>
        <begin position="402"/>
        <end position="422"/>
    </location>
</feature>
<feature type="topological domain" description="Vesicular" evidence="2">
    <location>
        <begin position="423"/>
        <end position="424"/>
    </location>
</feature>
<feature type="transmembrane region" description="Helical" evidence="2">
    <location>
        <begin position="425"/>
        <end position="445"/>
    </location>
</feature>
<feature type="topological domain" description="Cytoplasmic" evidence="2">
    <location>
        <begin position="446"/>
        <end position="457"/>
    </location>
</feature>
<feature type="transmembrane region" description="Helical" evidence="2">
    <location>
        <begin position="458"/>
        <end position="478"/>
    </location>
</feature>
<feature type="topological domain" description="Vesicular" evidence="2">
    <location>
        <begin position="479"/>
        <end position="489"/>
    </location>
</feature>
<feature type="transmembrane region" description="Helical" evidence="2">
    <location>
        <begin position="490"/>
        <end position="510"/>
    </location>
</feature>
<feature type="topological domain" description="Cytoplasmic" evidence="2">
    <location>
        <begin position="511"/>
        <end position="548"/>
    </location>
</feature>
<feature type="region of interest" description="Disordered" evidence="3">
    <location>
        <begin position="523"/>
        <end position="548"/>
    </location>
</feature>
<feature type="compositionally biased region" description="Polar residues" evidence="3">
    <location>
        <begin position="533"/>
        <end position="548"/>
    </location>
</feature>
<feature type="modified residue" description="Phosphoserine" evidence="6">
    <location>
        <position position="25"/>
    </location>
</feature>
<feature type="modified residue" description="Phosphoserine" evidence="6">
    <location>
        <position position="31"/>
    </location>
</feature>
<feature type="modified residue" description="Phosphoserine" evidence="1">
    <location>
        <position position="542"/>
    </location>
</feature>
<evidence type="ECO:0000250" key="1">
    <source>
        <dbReference type="UniProtKB" id="Q8BFT9"/>
    </source>
</evidence>
<evidence type="ECO:0000255" key="2"/>
<evidence type="ECO:0000256" key="3">
    <source>
        <dbReference type="SAM" id="MobiDB-lite"/>
    </source>
</evidence>
<evidence type="ECO:0000269" key="4">
    <source>
    </source>
</evidence>
<evidence type="ECO:0000305" key="5"/>
<evidence type="ECO:0007744" key="6">
    <source>
    </source>
</evidence>
<comment type="subcellular location">
    <subcellularLocation>
        <location evidence="4">Cytoplasmic vesicle</location>
        <location evidence="4">Secretory vesicle</location>
        <location evidence="4">Synaptic vesicle membrane</location>
        <topology evidence="4">Multi-pass membrane protein</topology>
    </subcellularLocation>
</comment>
<comment type="tissue specificity">
    <text evidence="4">Detected in brain (at protein level). Detected in brain, in synaptic layers of the cerebellum, hippocampus and cerebral cortex.</text>
</comment>
<comment type="similarity">
    <text evidence="5">Belongs to the major facilitator superfamily.</text>
</comment>
<protein>
    <recommendedName>
        <fullName>Synaptic vesicle 2-related protein</fullName>
        <shortName>SV2-related protein</shortName>
    </recommendedName>
</protein>
<name>SVOP_RAT</name>
<accession>Q9Z2I7</accession>
<gene>
    <name type="primary">Svop</name>
</gene>